<reference key="1">
    <citation type="journal article" date="1992" name="J. Interferon Res.">
        <title>Genes for the trophoblast interferons in sheep, goat, and musk ox and distribution of related genes among mammals.</title>
        <authorList>
            <person name="Leaman D.W."/>
            <person name="Roberts R.M."/>
        </authorList>
    </citation>
    <scope>NUCLEOTIDE SEQUENCE [GENOMIC DNA]</scope>
</reference>
<reference key="2">
    <citation type="journal article" date="1996" name="Endocrinology">
        <title>Ovine interferon tau suppresses transcription of the estrogen receptor and oxytocin receptor genes in the ovine endometrium.</title>
        <authorList>
            <person name="Spencer T.E."/>
            <person name="Bazer F.W."/>
        </authorList>
    </citation>
    <scope>FUNCTION</scope>
</reference>
<reference key="3">
    <citation type="journal article" date="1994" name="Protein Eng.">
        <title>Predicted structural motif of IFN tau.</title>
        <authorList>
            <person name="Jarpe M.A."/>
            <person name="Johnson H.M."/>
            <person name="Bazer F.W."/>
            <person name="Ott T.L."/>
            <person name="Curto E.V."/>
            <person name="Krishna N.R."/>
            <person name="Pontzer C.H."/>
        </authorList>
    </citation>
    <scope>CIRCULAR DICHROISM ANALYSIS</scope>
    <scope>3D-STRUCTURE MODELING</scope>
</reference>
<reference key="4">
    <citation type="journal article" date="1995" name="J. Interferon Cytokine Res.">
        <title>A three-dimensional model of interferon-tau.</title>
        <authorList>
            <person name="Senda T."/>
            <person name="Saitoh S."/>
            <person name="Mitsui Y."/>
            <person name="Li J."/>
            <person name="Roberts R.M."/>
        </authorList>
    </citation>
    <scope>3D-STRUCTURE MODELING</scope>
</reference>
<reference key="5">
    <citation type="journal article" date="1994" name="J. Biol. Chem.">
        <title>Structure-function relationships in the interferon-tau (IFN-tau). Changes in receptor binding and in antiviral and antiproliferative activities resulting from site-directed mutagenesis performed near the carboxyl terminus.</title>
        <authorList>
            <person name="Li J."/>
            <person name="Roberts R.M."/>
        </authorList>
    </citation>
    <scope>MUTAGENESIS</scope>
</reference>
<reference key="6">
    <citation type="journal article" date="1997" name="Biol. Reprod.">
        <title>Effect of variants of interferon-tau with mutations near the carboxyl terminus on luteal life span in sheep.</title>
        <authorList>
            <person name="Niswender K.D."/>
            <person name="Li J."/>
            <person name="Powell M.R."/>
            <person name="Loos K.R."/>
            <person name="Roberts R.M."/>
            <person name="Keisler D.H."/>
            <person name="Smith M.F."/>
        </authorList>
    </citation>
    <scope>MUTAGENESIS</scope>
</reference>
<reference key="7">
    <citation type="journal article" date="1998" name="Biochimie">
        <title>IFN-tau: a novel subtype I IFN1. Structural characteristics, non-ubiquitous expression, structure-function relationships, a pregnancy hormonal embryonic signal and cross-species therapeutic potentialities.</title>
        <authorList>
            <person name="Martal J.L."/>
            <person name="Chene N.M."/>
            <person name="Huynh L.P."/>
            <person name="L'Haridon R.M."/>
            <person name="Reinaud P.B."/>
            <person name="Guillomot M.W."/>
            <person name="Charlier M.A."/>
            <person name="Charpigny S.Y."/>
        </authorList>
    </citation>
    <scope>REVIEW</scope>
</reference>
<gene>
    <name type="primary">IFNT11</name>
</gene>
<organism>
    <name type="scientific">Ovis aries</name>
    <name type="common">Sheep</name>
    <dbReference type="NCBI Taxonomy" id="9940"/>
    <lineage>
        <taxon>Eukaryota</taxon>
        <taxon>Metazoa</taxon>
        <taxon>Chordata</taxon>
        <taxon>Craniata</taxon>
        <taxon>Vertebrata</taxon>
        <taxon>Euteleostomi</taxon>
        <taxon>Mammalia</taxon>
        <taxon>Eutheria</taxon>
        <taxon>Laurasiatheria</taxon>
        <taxon>Artiodactyla</taxon>
        <taxon>Ruminantia</taxon>
        <taxon>Pecora</taxon>
        <taxon>Bovidae</taxon>
        <taxon>Caprinae</taxon>
        <taxon>Ovis</taxon>
    </lineage>
</organism>
<keyword id="KW-0051">Antiviral defense</keyword>
<keyword id="KW-0202">Cytokine</keyword>
<keyword id="KW-1015">Disulfide bond</keyword>
<keyword id="KW-0325">Glycoprotein</keyword>
<keyword id="KW-0372">Hormone</keyword>
<keyword id="KW-0635">Pregnancy</keyword>
<keyword id="KW-1185">Reference proteome</keyword>
<keyword id="KW-0964">Secreted</keyword>
<keyword id="KW-0732">Signal</keyword>
<feature type="signal peptide" evidence="1">
    <location>
        <begin position="1"/>
        <end position="23"/>
    </location>
</feature>
<feature type="chain" id="PRO_0000016422" description="Interferon tau-11">
    <location>
        <begin position="24"/>
        <end position="195"/>
    </location>
</feature>
<feature type="glycosylation site" description="N-linked (GlcNAc...) asparagine" evidence="2">
    <location>
        <position position="101"/>
    </location>
</feature>
<feature type="disulfide bond" evidence="1">
    <location>
        <begin position="24"/>
        <end position="122"/>
    </location>
</feature>
<feature type="disulfide bond" evidence="1">
    <location>
        <begin position="52"/>
        <end position="162"/>
    </location>
</feature>
<feature type="mutagenesis site" description="20-fold reduction in receptor binding activity, greatly reduces antiviral and almost abolishes antiproliferative activity.">
    <original>I</original>
    <variation>T</variation>
    <location>
        <position position="166"/>
    </location>
</feature>
<feature type="mutagenesis site" description="Little effect on receptor binding activity but greatly reduces antiviral and almost abolishes antiproliferative activity.">
    <location>
        <position position="183"/>
    </location>
</feature>
<feature type="mutagenesis site" description="Little effect on receptor binding activity but greatly reduces antiviral and almost abolishes antiproliferative activity.">
    <location>
        <begin position="185"/>
        <end position="195"/>
    </location>
</feature>
<accession>P28169</accession>
<proteinExistence type="evidence at protein level"/>
<evidence type="ECO:0000250" key="1"/>
<evidence type="ECO:0000255" key="2"/>
<evidence type="ECO:0000269" key="3">
    <source>
    </source>
</evidence>
<evidence type="ECO:0000305" key="4"/>
<sequence>MAFVLSLLMALVLVSYGPGGSLGCYLSQRLMLDARENLRLLDRMNRLSPHSCLQDRKDFGLPQEMVEGDQLQEAQAFCVLYEMLQQSFNLFHTERSSAAWNTTLLEQLCTGLQQQLEDLDTCRGPVMGEKDSELGKMDPIVTVKKYFQGIHFYLKEKEYSDCAWEIVRVEMMRALSSSTSLQERLRKMGGDLNSP</sequence>
<dbReference type="EMBL" id="M73241">
    <property type="protein sequence ID" value="AAA31573.1"/>
    <property type="molecule type" value="Genomic_DNA"/>
</dbReference>
<dbReference type="PIR" id="I47097">
    <property type="entry name" value="I47097"/>
</dbReference>
<dbReference type="SMR" id="P28169"/>
<dbReference type="GlyCosmos" id="P28169">
    <property type="glycosylation" value="1 site, No reported glycans"/>
</dbReference>
<dbReference type="Ensembl" id="ENSOART00020010299">
    <property type="protein sequence ID" value="ENSOARP00020008491"/>
    <property type="gene ID" value="ENSOARG00020006730"/>
</dbReference>
<dbReference type="Ensembl" id="ENSOART00025011910">
    <property type="protein sequence ID" value="ENSOARP00025006004"/>
    <property type="gene ID" value="ENSOARG00025007205"/>
</dbReference>
<dbReference type="Ensembl" id="ENSOART00185007331">
    <property type="protein sequence ID" value="ENSOARP00185003312"/>
    <property type="gene ID" value="ENSOARG00185004670"/>
</dbReference>
<dbReference type="Ensembl" id="ENSOART00215078540">
    <property type="protein sequence ID" value="ENSOARP00215043326"/>
    <property type="gene ID" value="ENSOARG00215046204"/>
</dbReference>
<dbReference type="Ensembl" id="ENSOART00225060196">
    <property type="protein sequence ID" value="ENSOARP00225030284"/>
    <property type="gene ID" value="ENSOARG00225036368"/>
</dbReference>
<dbReference type="Proteomes" id="UP000002356">
    <property type="component" value="Unplaced"/>
</dbReference>
<dbReference type="GO" id="GO:0005615">
    <property type="term" value="C:extracellular space"/>
    <property type="evidence" value="ECO:0007669"/>
    <property type="project" value="UniProtKB-KW"/>
</dbReference>
<dbReference type="GO" id="GO:0005125">
    <property type="term" value="F:cytokine activity"/>
    <property type="evidence" value="ECO:0007669"/>
    <property type="project" value="UniProtKB-KW"/>
</dbReference>
<dbReference type="GO" id="GO:0005126">
    <property type="term" value="F:cytokine receptor binding"/>
    <property type="evidence" value="ECO:0007669"/>
    <property type="project" value="InterPro"/>
</dbReference>
<dbReference type="GO" id="GO:0005179">
    <property type="term" value="F:hormone activity"/>
    <property type="evidence" value="ECO:0007669"/>
    <property type="project" value="UniProtKB-KW"/>
</dbReference>
<dbReference type="GO" id="GO:0051607">
    <property type="term" value="P:defense response to virus"/>
    <property type="evidence" value="ECO:0007669"/>
    <property type="project" value="UniProtKB-KW"/>
</dbReference>
<dbReference type="GO" id="GO:0007565">
    <property type="term" value="P:female pregnancy"/>
    <property type="evidence" value="ECO:0007669"/>
    <property type="project" value="UniProtKB-KW"/>
</dbReference>
<dbReference type="CDD" id="cd00095">
    <property type="entry name" value="IFab"/>
    <property type="match status" value="1"/>
</dbReference>
<dbReference type="FunFam" id="1.20.1250.10:FF:000001">
    <property type="entry name" value="Interferon alpha"/>
    <property type="match status" value="1"/>
</dbReference>
<dbReference type="Gene3D" id="1.20.1250.10">
    <property type="match status" value="1"/>
</dbReference>
<dbReference type="InterPro" id="IPR009079">
    <property type="entry name" value="4_helix_cytokine-like_core"/>
</dbReference>
<dbReference type="InterPro" id="IPR000471">
    <property type="entry name" value="Interferon_alpha/beta/delta"/>
</dbReference>
<dbReference type="PANTHER" id="PTHR11691:SF37">
    <property type="entry name" value="INTERFERON OMEGA-1"/>
    <property type="match status" value="1"/>
</dbReference>
<dbReference type="PANTHER" id="PTHR11691">
    <property type="entry name" value="TYPE I INTERFERON"/>
    <property type="match status" value="1"/>
</dbReference>
<dbReference type="Pfam" id="PF00143">
    <property type="entry name" value="Interferon"/>
    <property type="match status" value="1"/>
</dbReference>
<dbReference type="PRINTS" id="PR00266">
    <property type="entry name" value="INTERFERONAB"/>
</dbReference>
<dbReference type="SMART" id="SM00076">
    <property type="entry name" value="IFabd"/>
    <property type="match status" value="1"/>
</dbReference>
<dbReference type="SUPFAM" id="SSF47266">
    <property type="entry name" value="4-helical cytokines"/>
    <property type="match status" value="1"/>
</dbReference>
<dbReference type="PROSITE" id="PS00252">
    <property type="entry name" value="INTERFERON_A_B_D"/>
    <property type="match status" value="1"/>
</dbReference>
<comment type="function">
    <text evidence="3">Paracrine hormone primarily responsible for maternal recognition of pregnancy. Interacts with endometrial receptors, probably type I interferon receptors, and blocks estrogen receptor expression, preventing the estrogen-induced increase in oxytocin receptor expression in the endometrium. This results in the suppression of the pulsatile endometrial release of the luteolytic hormone prostaglandin F2-alpha, hindering the regression of the corpus luteum (luteolysis) and therefore a return to ovarian cyclicity. This, and a possible direct effect of IFN-tau on prostaglandin synthesis, leads in turn to continued ovarian progesterone secretion, which stimulates the secretion by the endometrium of the nutrients required for the growth of the conceptus. In summary, displays particularly high antiviral and antiproliferative potency concurrently with particular weak cytotoxicity, high antiluteolytic activity and immunomodulatory properties. In contrast with other IFNs, IFN-tau is not virally inducible.</text>
</comment>
<comment type="subcellular location">
    <subcellularLocation>
        <location>Secreted</location>
    </subcellularLocation>
    <text>Secreted into the uterine lumen.</text>
</comment>
<comment type="tissue specificity">
    <text>Constitutively and exclusively expressed in the mononuclear cells of the extraembryonic trophectoderm.</text>
</comment>
<comment type="developmental stage">
    <text>Major secretory product synthesized by the sheep conceptus between days 13 and 21 of pregnancy.</text>
</comment>
<comment type="miscellaneous">
    <text>IFN-tau genes are intronless. They evolved from IFN-omega genes in the ruminantia suborder and have continued to duplicate independently in different lineages of the ruminantia. They code for proteins very similar in sequence but with different biological potency and pattern of expression.</text>
</comment>
<comment type="similarity">
    <text evidence="4">Belongs to the alpha/beta interferon family. IFN-alphaII subfamily.</text>
</comment>
<protein>
    <recommendedName>
        <fullName>Interferon tau-11</fullName>
        <shortName>IFN-tau-11</shortName>
    </recommendedName>
    <alternativeName>
        <fullName>Antiluteolysin</fullName>
    </alternativeName>
    <alternativeName>
        <fullName>P4</fullName>
    </alternativeName>
    <alternativeName>
        <fullName>S4</fullName>
    </alternativeName>
    <alternativeName>
        <fullName>Trophoblast antiluteolytic protein</fullName>
    </alternativeName>
    <alternativeName>
        <fullName>Trophoblast protein 1</fullName>
        <shortName>TP-1</shortName>
    </alternativeName>
    <alternativeName>
        <fullName>Trophoblastin</fullName>
    </alternativeName>
</protein>
<name>IFNTB_SHEEP</name>